<protein>
    <recommendedName>
        <fullName evidence="4">Acyl-CoA ligase easD</fullName>
        <ecNumber evidence="6">6.2.1.-</ecNumber>
    </recommendedName>
    <alternativeName>
        <fullName evidence="4">Emericellamide biosynthesis protein B</fullName>
    </alternativeName>
</protein>
<gene>
    <name evidence="4" type="primary">easD</name>
    <name type="ORF">AN2549</name>
</gene>
<accession>Q5BA81</accession>
<accession>C8VPT3</accession>
<feature type="chain" id="PRO_0000438972" description="Acyl-CoA ligase easD">
    <location>
        <begin position="1"/>
        <end position="565"/>
    </location>
</feature>
<feature type="region of interest" description="SBD1" evidence="2">
    <location>
        <begin position="284"/>
        <end position="354"/>
    </location>
</feature>
<feature type="region of interest" description="SBD2" evidence="2">
    <location>
        <begin position="355"/>
        <end position="417"/>
    </location>
</feature>
<feature type="binding site" evidence="1">
    <location>
        <begin position="213"/>
        <end position="221"/>
    </location>
    <ligand>
        <name>ATP</name>
        <dbReference type="ChEBI" id="CHEBI:30616"/>
    </ligand>
</feature>
<feature type="binding site" evidence="1">
    <location>
        <begin position="354"/>
        <end position="359"/>
    </location>
    <ligand>
        <name>ATP</name>
        <dbReference type="ChEBI" id="CHEBI:30616"/>
    </ligand>
</feature>
<feature type="binding site" evidence="1">
    <location>
        <position position="438"/>
    </location>
    <ligand>
        <name>ATP</name>
        <dbReference type="ChEBI" id="CHEBI:30616"/>
    </ligand>
</feature>
<feature type="binding site" evidence="1">
    <location>
        <position position="457"/>
    </location>
    <ligand>
        <name>ATP</name>
        <dbReference type="ChEBI" id="CHEBI:30616"/>
    </ligand>
</feature>
<feature type="binding site" evidence="1">
    <location>
        <position position="555"/>
    </location>
    <ligand>
        <name>ATP</name>
        <dbReference type="ChEBI" id="CHEBI:30616"/>
    </ligand>
</feature>
<name>EASD_EMENI</name>
<comment type="function">
    <text evidence="3">Acyl-CoA ligase; part of the gene cluster that mediates the biosynthesis of emericellamides, secondary metabolites acting as antibiotics (PubMed:18559263). The biosynthesis of emericellamides initiates from the highly reducing polyketide synthase easB which catalyzes the formation of the linear polyketide chain (PubMed:18559263). EasB produces several polyketides that can be further processed by the downstream enzymes (PubMed:18559263). The polyketides are released from easB as linear polyketide carboxylic acids, which are converted to CoA thioesters by the acyl-CoA ligase easD (PubMed:18559263). The substrates are then loaded onto the acyltransferase easC, which shuttles them to the first thiolation (T) domain of the nonribosomal peptide synthetase easA (PubMed:18559263). EasA then performs condensation of the polyketides with one glycine, two alanine, one valine and one leucine residues (PubMed:18559263). A last step of cyclization leads to the production of emericellamides (PubMed:18559263).</text>
</comment>
<comment type="pathway">
    <text evidence="3">Antibiotic biosynthesis.</text>
</comment>
<comment type="domain">
    <text evidence="2">Both substrate-binding domains (SBD1 and SBD2) are involved in the substrate recognition, and are sufficient to confer the substrate specificity.</text>
</comment>
<comment type="disruption phenotype">
    <text evidence="3">Impairs the production of emerecellamide A, C, D, E and F (PubMed:18559263).</text>
</comment>
<comment type="similarity">
    <text evidence="5">Belongs to the ATP-dependent AMP-binding enzyme family.</text>
</comment>
<evidence type="ECO:0000250" key="1">
    <source>
        <dbReference type="UniProtKB" id="Q08AH3"/>
    </source>
</evidence>
<evidence type="ECO:0000250" key="2">
    <source>
        <dbReference type="UniProtKB" id="Q42524"/>
    </source>
</evidence>
<evidence type="ECO:0000269" key="3">
    <source>
    </source>
</evidence>
<evidence type="ECO:0000303" key="4">
    <source>
    </source>
</evidence>
<evidence type="ECO:0000305" key="5"/>
<evidence type="ECO:0000305" key="6">
    <source>
    </source>
</evidence>
<reference key="1">
    <citation type="journal article" date="2005" name="Nature">
        <title>Sequencing of Aspergillus nidulans and comparative analysis with A. fumigatus and A. oryzae.</title>
        <authorList>
            <person name="Galagan J.E."/>
            <person name="Calvo S.E."/>
            <person name="Cuomo C."/>
            <person name="Ma L.-J."/>
            <person name="Wortman J.R."/>
            <person name="Batzoglou S."/>
            <person name="Lee S.-I."/>
            <person name="Bastuerkmen M."/>
            <person name="Spevak C.C."/>
            <person name="Clutterbuck J."/>
            <person name="Kapitonov V."/>
            <person name="Jurka J."/>
            <person name="Scazzocchio C."/>
            <person name="Farman M.L."/>
            <person name="Butler J."/>
            <person name="Purcell S."/>
            <person name="Harris S."/>
            <person name="Braus G.H."/>
            <person name="Draht O."/>
            <person name="Busch S."/>
            <person name="D'Enfert C."/>
            <person name="Bouchier C."/>
            <person name="Goldman G.H."/>
            <person name="Bell-Pedersen D."/>
            <person name="Griffiths-Jones S."/>
            <person name="Doonan J.H."/>
            <person name="Yu J."/>
            <person name="Vienken K."/>
            <person name="Pain A."/>
            <person name="Freitag M."/>
            <person name="Selker E.U."/>
            <person name="Archer D.B."/>
            <person name="Penalva M.A."/>
            <person name="Oakley B.R."/>
            <person name="Momany M."/>
            <person name="Tanaka T."/>
            <person name="Kumagai T."/>
            <person name="Asai K."/>
            <person name="Machida M."/>
            <person name="Nierman W.C."/>
            <person name="Denning D.W."/>
            <person name="Caddick M.X."/>
            <person name="Hynes M."/>
            <person name="Paoletti M."/>
            <person name="Fischer R."/>
            <person name="Miller B.L."/>
            <person name="Dyer P.S."/>
            <person name="Sachs M.S."/>
            <person name="Osmani S.A."/>
            <person name="Birren B.W."/>
        </authorList>
    </citation>
    <scope>NUCLEOTIDE SEQUENCE [LARGE SCALE GENOMIC DNA]</scope>
    <source>
        <strain>FGSC A4 / ATCC 38163 / CBS 112.46 / NRRL 194 / M139</strain>
    </source>
</reference>
<reference key="2">
    <citation type="journal article" date="2009" name="Fungal Genet. Biol.">
        <title>The 2008 update of the Aspergillus nidulans genome annotation: a community effort.</title>
        <authorList>
            <person name="Wortman J.R."/>
            <person name="Gilsenan J.M."/>
            <person name="Joardar V."/>
            <person name="Deegan J."/>
            <person name="Clutterbuck J."/>
            <person name="Andersen M.R."/>
            <person name="Archer D."/>
            <person name="Bencina M."/>
            <person name="Braus G."/>
            <person name="Coutinho P."/>
            <person name="von Dohren H."/>
            <person name="Doonan J."/>
            <person name="Driessen A.J."/>
            <person name="Durek P."/>
            <person name="Espeso E."/>
            <person name="Fekete E."/>
            <person name="Flipphi M."/>
            <person name="Estrada C.G."/>
            <person name="Geysens S."/>
            <person name="Goldman G."/>
            <person name="de Groot P.W."/>
            <person name="Hansen K."/>
            <person name="Harris S.D."/>
            <person name="Heinekamp T."/>
            <person name="Helmstaedt K."/>
            <person name="Henrissat B."/>
            <person name="Hofmann G."/>
            <person name="Homan T."/>
            <person name="Horio T."/>
            <person name="Horiuchi H."/>
            <person name="James S."/>
            <person name="Jones M."/>
            <person name="Karaffa L."/>
            <person name="Karanyi Z."/>
            <person name="Kato M."/>
            <person name="Keller N."/>
            <person name="Kelly D.E."/>
            <person name="Kiel J.A."/>
            <person name="Kim J.M."/>
            <person name="van der Klei I.J."/>
            <person name="Klis F.M."/>
            <person name="Kovalchuk A."/>
            <person name="Krasevec N."/>
            <person name="Kubicek C.P."/>
            <person name="Liu B."/>
            <person name="Maccabe A."/>
            <person name="Meyer V."/>
            <person name="Mirabito P."/>
            <person name="Miskei M."/>
            <person name="Mos M."/>
            <person name="Mullins J."/>
            <person name="Nelson D.R."/>
            <person name="Nielsen J."/>
            <person name="Oakley B.R."/>
            <person name="Osmani S.A."/>
            <person name="Pakula T."/>
            <person name="Paszewski A."/>
            <person name="Paulsen I."/>
            <person name="Pilsyk S."/>
            <person name="Pocsi I."/>
            <person name="Punt P.J."/>
            <person name="Ram A.F."/>
            <person name="Ren Q."/>
            <person name="Robellet X."/>
            <person name="Robson G."/>
            <person name="Seiboth B."/>
            <person name="van Solingen P."/>
            <person name="Specht T."/>
            <person name="Sun J."/>
            <person name="Taheri-Talesh N."/>
            <person name="Takeshita N."/>
            <person name="Ussery D."/>
            <person name="vanKuyk P.A."/>
            <person name="Visser H."/>
            <person name="van de Vondervoort P.J."/>
            <person name="de Vries R.P."/>
            <person name="Walton J."/>
            <person name="Xiang X."/>
            <person name="Xiong Y."/>
            <person name="Zeng A.P."/>
            <person name="Brandt B.W."/>
            <person name="Cornell M.J."/>
            <person name="van den Hondel C.A."/>
            <person name="Visser J."/>
            <person name="Oliver S.G."/>
            <person name="Turner G."/>
        </authorList>
    </citation>
    <scope>GENOME REANNOTATION</scope>
    <source>
        <strain>FGSC A4 / ATCC 38163 / CBS 112.46 / NRRL 194 / M139</strain>
    </source>
</reference>
<reference key="3">
    <citation type="journal article" date="2008" name="Chem. Biol.">
        <title>Molecular genetic mining of the Aspergillus secondary metabolome: discovery of the emericellamide biosynthetic pathway.</title>
        <authorList>
            <person name="Chiang Y.M."/>
            <person name="Szewczyk E."/>
            <person name="Nayak T."/>
            <person name="Davidson A.D."/>
            <person name="Sanchez J.F."/>
            <person name="Lo H.C."/>
            <person name="Ho W.Y."/>
            <person name="Simityan H."/>
            <person name="Kuo E."/>
            <person name="Praseuth A."/>
            <person name="Watanabe K."/>
            <person name="Oakley B.R."/>
            <person name="Wang C.C."/>
        </authorList>
    </citation>
    <scope>FUNCTION</scope>
    <scope>DISRUPTION PHENOTYPE</scope>
</reference>
<organism>
    <name type="scientific">Emericella nidulans (strain FGSC A4 / ATCC 38163 / CBS 112.46 / NRRL 194 / M139)</name>
    <name type="common">Aspergillus nidulans</name>
    <dbReference type="NCBI Taxonomy" id="227321"/>
    <lineage>
        <taxon>Eukaryota</taxon>
        <taxon>Fungi</taxon>
        <taxon>Dikarya</taxon>
        <taxon>Ascomycota</taxon>
        <taxon>Pezizomycotina</taxon>
        <taxon>Eurotiomycetes</taxon>
        <taxon>Eurotiomycetidae</taxon>
        <taxon>Eurotiales</taxon>
        <taxon>Aspergillaceae</taxon>
        <taxon>Aspergillus</taxon>
        <taxon>Aspergillus subgen. Nidulantes</taxon>
    </lineage>
</organism>
<sequence>MVFSSPSWVPRIPCEIPDSIPVGQFALEGNTSLPPQCGGRPPFVCAITGKSYSTKVLVDRVEFLSRSLAQELGWSPNEGEPEDKVVGIYSWNTLDFFALCWAVHRLNGICLPLHPFSIVPEVVAHMKRAKCRVIFTCQSLVANTLEAARELSIPGDKIYTTALPEAYLQNPEPIDQFKSVDQLIAEGEKLQRLPPLQWEKGRAKIQVAYYCATSGTSGKQKLAKITHYNFIANVMQVCMHESYAKNGRNEIAFGAIPLTHGYGLNIGHIMVYRGDTYVICPRFDMQLMLKTIERFRVERLYVVPPILAALAANPFLLDLHDLSSVQATVTGAAALDRSIAAKLNKLRPTWKINHAYGLTETGVVATLTSPHDVWHGSSGSLLPSFEIRLVKPDGTDAEGLDEPGEVHFNSPSCFLGYVGDDESNKNTFDEKGWLKSGDIGVFRKSPNGHAHLFILERIKDMIKVKGEQVLPRDIESVLLSHPAVIDAAVIGVPDELSGERAKAYIVRSKTVMEDLDEDDLADEIDEFVQGKLHESHWLHDRIVFLEKLPKSESGKVLKKDLKAMN</sequence>
<keyword id="KW-0067">ATP-binding</keyword>
<keyword id="KW-0436">Ligase</keyword>
<keyword id="KW-0547">Nucleotide-binding</keyword>
<keyword id="KW-1185">Reference proteome</keyword>
<dbReference type="EC" id="6.2.1.-" evidence="6"/>
<dbReference type="EMBL" id="BN001307">
    <property type="protein sequence ID" value="CBF87076.1"/>
    <property type="molecule type" value="Genomic_DNA"/>
</dbReference>
<dbReference type="EMBL" id="AACD01000043">
    <property type="protein sequence ID" value="EAA64654.1"/>
    <property type="molecule type" value="Genomic_DNA"/>
</dbReference>
<dbReference type="RefSeq" id="XP_660153.1">
    <property type="nucleotide sequence ID" value="XM_655061.1"/>
</dbReference>
<dbReference type="SMR" id="Q5BA81"/>
<dbReference type="STRING" id="227321.Q5BA81"/>
<dbReference type="EnsemblFungi" id="CBF87076">
    <property type="protein sequence ID" value="CBF87076"/>
    <property type="gene ID" value="ANIA_02549"/>
</dbReference>
<dbReference type="KEGG" id="ani:ANIA_02549"/>
<dbReference type="VEuPathDB" id="FungiDB:AN2549"/>
<dbReference type="eggNOG" id="KOG1176">
    <property type="taxonomic scope" value="Eukaryota"/>
</dbReference>
<dbReference type="HOGENOM" id="CLU_000022_59_2_1"/>
<dbReference type="InParanoid" id="Q5BA81"/>
<dbReference type="OMA" id="LQWESAK"/>
<dbReference type="OrthoDB" id="6509636at2759"/>
<dbReference type="Proteomes" id="UP000000560">
    <property type="component" value="Chromosome VII"/>
</dbReference>
<dbReference type="GO" id="GO:0005524">
    <property type="term" value="F:ATP binding"/>
    <property type="evidence" value="ECO:0007669"/>
    <property type="project" value="UniProtKB-KW"/>
</dbReference>
<dbReference type="GO" id="GO:0016405">
    <property type="term" value="F:CoA-ligase activity"/>
    <property type="evidence" value="ECO:0000318"/>
    <property type="project" value="GO_Central"/>
</dbReference>
<dbReference type="GO" id="GO:1900617">
    <property type="term" value="P:emericellamide A biosynthetic process"/>
    <property type="evidence" value="ECO:0000315"/>
    <property type="project" value="AspGD"/>
</dbReference>
<dbReference type="GO" id="GO:1900557">
    <property type="term" value="P:emericellamide biosynthetic process"/>
    <property type="evidence" value="ECO:0000315"/>
    <property type="project" value="AspGD"/>
</dbReference>
<dbReference type="CDD" id="cd05911">
    <property type="entry name" value="Firefly_Luc_like"/>
    <property type="match status" value="1"/>
</dbReference>
<dbReference type="FunFam" id="3.30.300.30:FF:000008">
    <property type="entry name" value="2,3-dihydroxybenzoate-AMP ligase"/>
    <property type="match status" value="1"/>
</dbReference>
<dbReference type="Gene3D" id="3.30.300.30">
    <property type="match status" value="1"/>
</dbReference>
<dbReference type="Gene3D" id="3.40.50.980">
    <property type="match status" value="2"/>
</dbReference>
<dbReference type="Gene3D" id="2.30.38.10">
    <property type="entry name" value="Luciferase, Domain 3"/>
    <property type="match status" value="1"/>
</dbReference>
<dbReference type="InterPro" id="IPR025110">
    <property type="entry name" value="AMP-bd_C"/>
</dbReference>
<dbReference type="InterPro" id="IPR045851">
    <property type="entry name" value="AMP-bd_C_sf"/>
</dbReference>
<dbReference type="InterPro" id="IPR000873">
    <property type="entry name" value="AMP-dep_synth/lig_dom"/>
</dbReference>
<dbReference type="PANTHER" id="PTHR24096:SF422">
    <property type="entry name" value="BCDNA.GH02901"/>
    <property type="match status" value="1"/>
</dbReference>
<dbReference type="PANTHER" id="PTHR24096">
    <property type="entry name" value="LONG-CHAIN-FATTY-ACID--COA LIGASE"/>
    <property type="match status" value="1"/>
</dbReference>
<dbReference type="Pfam" id="PF00501">
    <property type="entry name" value="AMP-binding"/>
    <property type="match status" value="1"/>
</dbReference>
<dbReference type="Pfam" id="PF13193">
    <property type="entry name" value="AMP-binding_C"/>
    <property type="match status" value="1"/>
</dbReference>
<dbReference type="SUPFAM" id="SSF56801">
    <property type="entry name" value="Acetyl-CoA synthetase-like"/>
    <property type="match status" value="1"/>
</dbReference>
<proteinExistence type="inferred from homology"/>